<reference key="1">
    <citation type="journal article" date="2004" name="Neuron">
        <title>Intraflagellar transport genes are essential for differentiation and survival of vertebrate sensory neurons.</title>
        <authorList>
            <person name="Tsujikawa M."/>
            <person name="Malicki J."/>
        </authorList>
    </citation>
    <scope>NUCLEOTIDE SEQUENCE [MRNA]</scope>
</reference>
<reference key="2">
    <citation type="submission" date="2004-09" db="EMBL/GenBank/DDBJ databases">
        <authorList>
            <consortium name="NIH - Zebrafish Gene Collection (ZGC) project"/>
        </authorList>
    </citation>
    <scope>NUCLEOTIDE SEQUENCE [LARGE SCALE MRNA]</scope>
    <source>
        <tissue>Liver</tissue>
    </source>
</reference>
<sequence length="132" mass="15287">MAKDPLAEAGLHFDELNKLRVLEPDVSQKTTELKEECEEFVDKIGQFQKIVGGLIELVDELAKEAETEKMKAIGARNLLKSVEKQREAQHQQLQALIAEKKMQLERYRIEYEALQKVEAEQSEFIDQFILQK</sequence>
<organism>
    <name type="scientific">Danio rerio</name>
    <name type="common">Zebrafish</name>
    <name type="synonym">Brachydanio rerio</name>
    <dbReference type="NCBI Taxonomy" id="7955"/>
    <lineage>
        <taxon>Eukaryota</taxon>
        <taxon>Metazoa</taxon>
        <taxon>Chordata</taxon>
        <taxon>Craniata</taxon>
        <taxon>Vertebrata</taxon>
        <taxon>Euteleostomi</taxon>
        <taxon>Actinopterygii</taxon>
        <taxon>Neopterygii</taxon>
        <taxon>Teleostei</taxon>
        <taxon>Ostariophysi</taxon>
        <taxon>Cypriniformes</taxon>
        <taxon>Danionidae</taxon>
        <taxon>Danioninae</taxon>
        <taxon>Danio</taxon>
    </lineage>
</organism>
<feature type="chain" id="PRO_0000249305" description="Intraflagellar transport protein 20 homolog">
    <location>
        <begin position="1"/>
        <end position="132"/>
    </location>
</feature>
<feature type="coiled-coil region" evidence="2">
    <location>
        <begin position="74"/>
        <end position="123"/>
    </location>
</feature>
<feature type="sequence conflict" description="In Ref. 1; AAT27466." evidence="3" ref="1">
    <original>H</original>
    <variation>Q</variation>
    <location>
        <position position="90"/>
    </location>
</feature>
<accession>Q66I67</accession>
<accession>Q6J505</accession>
<keyword id="KW-0966">Cell projection</keyword>
<keyword id="KW-0970">Cilium biogenesis/degradation</keyword>
<keyword id="KW-0175">Coiled coil</keyword>
<keyword id="KW-0963">Cytoplasm</keyword>
<keyword id="KW-0968">Cytoplasmic vesicle</keyword>
<keyword id="KW-0206">Cytoskeleton</keyword>
<keyword id="KW-0221">Differentiation</keyword>
<keyword id="KW-0333">Golgi apparatus</keyword>
<keyword id="KW-1185">Reference proteome</keyword>
<keyword id="KW-0744">Spermatogenesis</keyword>
<gene>
    <name type="primary">ift20</name>
    <name type="ORF">zgc:103674</name>
</gene>
<protein>
    <recommendedName>
        <fullName>Intraflagellar transport protein 20 homolog</fullName>
    </recommendedName>
</protein>
<proteinExistence type="evidence at transcript level"/>
<dbReference type="EMBL" id="AY600453">
    <property type="protein sequence ID" value="AAT27466.1"/>
    <property type="molecule type" value="mRNA"/>
</dbReference>
<dbReference type="EMBL" id="BC081508">
    <property type="protein sequence ID" value="AAH81508.1"/>
    <property type="molecule type" value="mRNA"/>
</dbReference>
<dbReference type="RefSeq" id="NP_001001833.2">
    <property type="nucleotide sequence ID" value="NM_001001833.2"/>
</dbReference>
<dbReference type="RefSeq" id="XP_005157634.1">
    <property type="nucleotide sequence ID" value="XM_005157577.3"/>
</dbReference>
<dbReference type="SMR" id="Q66I67"/>
<dbReference type="FunCoup" id="Q66I67">
    <property type="interactions" value="766"/>
</dbReference>
<dbReference type="STRING" id="7955.ENSDARP00000145296"/>
<dbReference type="PaxDb" id="7955-ENSDARP00000059350"/>
<dbReference type="DNASU" id="414930"/>
<dbReference type="GeneID" id="414930"/>
<dbReference type="KEGG" id="dre:414930"/>
<dbReference type="AGR" id="ZFIN:ZDB-GENE-040614-2"/>
<dbReference type="CTD" id="90410"/>
<dbReference type="ZFIN" id="ZDB-GENE-040614-2">
    <property type="gene designation" value="ift20"/>
</dbReference>
<dbReference type="eggNOG" id="ENOG502RYYR">
    <property type="taxonomic scope" value="Eukaryota"/>
</dbReference>
<dbReference type="InParanoid" id="Q66I67"/>
<dbReference type="OrthoDB" id="10254896at2759"/>
<dbReference type="PhylomeDB" id="Q66I67"/>
<dbReference type="TreeFam" id="TF319434"/>
<dbReference type="PRO" id="PR:Q66I67"/>
<dbReference type="Proteomes" id="UP000000437">
    <property type="component" value="Chromosome 15"/>
</dbReference>
<dbReference type="GO" id="GO:0001669">
    <property type="term" value="C:acrosomal vesicle"/>
    <property type="evidence" value="ECO:0000250"/>
    <property type="project" value="UniProtKB"/>
</dbReference>
<dbReference type="GO" id="GO:0005930">
    <property type="term" value="C:axoneme"/>
    <property type="evidence" value="ECO:0000314"/>
    <property type="project" value="ZFIN"/>
</dbReference>
<dbReference type="GO" id="GO:0005814">
    <property type="term" value="C:centriole"/>
    <property type="evidence" value="ECO:0007669"/>
    <property type="project" value="UniProtKB-SubCell"/>
</dbReference>
<dbReference type="GO" id="GO:0005813">
    <property type="term" value="C:centrosome"/>
    <property type="evidence" value="ECO:0000318"/>
    <property type="project" value="GO_Central"/>
</dbReference>
<dbReference type="GO" id="GO:0036064">
    <property type="term" value="C:ciliary basal body"/>
    <property type="evidence" value="ECO:0000314"/>
    <property type="project" value="ZFIN"/>
</dbReference>
<dbReference type="GO" id="GO:0097546">
    <property type="term" value="C:ciliary base"/>
    <property type="evidence" value="ECO:0000318"/>
    <property type="project" value="GO_Central"/>
</dbReference>
<dbReference type="GO" id="GO:0005737">
    <property type="term" value="C:cytoplasm"/>
    <property type="evidence" value="ECO:0000318"/>
    <property type="project" value="GO_Central"/>
</dbReference>
<dbReference type="GO" id="GO:0005794">
    <property type="term" value="C:Golgi apparatus"/>
    <property type="evidence" value="ECO:0000250"/>
    <property type="project" value="UniProtKB"/>
</dbReference>
<dbReference type="GO" id="GO:0030990">
    <property type="term" value="C:intraciliary transport particle"/>
    <property type="evidence" value="ECO:0000318"/>
    <property type="project" value="GO_Central"/>
</dbReference>
<dbReference type="GO" id="GO:0030992">
    <property type="term" value="C:intraciliary transport particle B"/>
    <property type="evidence" value="ECO:0000250"/>
    <property type="project" value="UniProtKB"/>
</dbReference>
<dbReference type="GO" id="GO:0043005">
    <property type="term" value="C:neuron projection"/>
    <property type="evidence" value="ECO:0000318"/>
    <property type="project" value="GO_Central"/>
</dbReference>
<dbReference type="GO" id="GO:0097730">
    <property type="term" value="C:non-motile cilium"/>
    <property type="evidence" value="ECO:0000318"/>
    <property type="project" value="GO_Central"/>
</dbReference>
<dbReference type="GO" id="GO:0030154">
    <property type="term" value="P:cell differentiation"/>
    <property type="evidence" value="ECO:0007669"/>
    <property type="project" value="UniProtKB-KW"/>
</dbReference>
<dbReference type="GO" id="GO:0060271">
    <property type="term" value="P:cilium assembly"/>
    <property type="evidence" value="ECO:0000318"/>
    <property type="project" value="GO_Central"/>
</dbReference>
<dbReference type="GO" id="GO:0042073">
    <property type="term" value="P:intraciliary transport"/>
    <property type="evidence" value="ECO:0000303"/>
    <property type="project" value="ZFIN"/>
</dbReference>
<dbReference type="GO" id="GO:0061512">
    <property type="term" value="P:protein localization to cilium"/>
    <property type="evidence" value="ECO:0000318"/>
    <property type="project" value="GO_Central"/>
</dbReference>
<dbReference type="GO" id="GO:2000583">
    <property type="term" value="P:regulation of platelet-derived growth factor receptor-alpha signaling pathway"/>
    <property type="evidence" value="ECO:0000250"/>
    <property type="project" value="UniProtKB"/>
</dbReference>
<dbReference type="GO" id="GO:0007283">
    <property type="term" value="P:spermatogenesis"/>
    <property type="evidence" value="ECO:0000250"/>
    <property type="project" value="UniProtKB"/>
</dbReference>
<dbReference type="InterPro" id="IPR028172">
    <property type="entry name" value="FT20"/>
</dbReference>
<dbReference type="PANTHER" id="PTHR31978">
    <property type="entry name" value="INTRAFLAGELLAR TRANSPORT PROTEIN 20 HOMOLOG"/>
    <property type="match status" value="1"/>
</dbReference>
<dbReference type="PANTHER" id="PTHR31978:SF1">
    <property type="entry name" value="INTRAFLAGELLAR TRANSPORT PROTEIN 20 HOMOLOG"/>
    <property type="match status" value="1"/>
</dbReference>
<dbReference type="Pfam" id="PF14931">
    <property type="entry name" value="IFT20"/>
    <property type="match status" value="1"/>
</dbReference>
<comment type="function">
    <text evidence="1">Involved in ciliary process assembly. May play a role in the trafficking of ciliary membrane proteins from the Golgi complex to the cilium. Regulates the platelet-derived growth factor receptor-alpha (PDGFRA) signaling pathway. Plays an important role in spermatogenesis, particularly spermiogenesis, when germ cells form flagella.</text>
</comment>
<comment type="subcellular location">
    <subcellularLocation>
        <location evidence="1">Golgi apparatus</location>
        <location evidence="1">cis-Golgi network</location>
    </subcellularLocation>
    <subcellularLocation>
        <location evidence="1">Cytoplasm</location>
        <location evidence="1">Cytoskeleton</location>
        <location evidence="1">Microtubule organizing center</location>
        <location evidence="1">Centrosome</location>
        <location evidence="1">Centriole</location>
    </subcellularLocation>
    <subcellularLocation>
        <location evidence="1">Cell projection</location>
        <location evidence="1">Cilium</location>
    </subcellularLocation>
    <subcellularLocation>
        <location evidence="1">Golgi apparatus</location>
    </subcellularLocation>
    <subcellularLocation>
        <location evidence="1">Cytoplasmic vesicle</location>
        <location evidence="1">Secretory vesicle</location>
        <location evidence="1">Acrosome</location>
    </subcellularLocation>
    <subcellularLocation>
        <location evidence="1">Cytoplasm</location>
    </subcellularLocation>
</comment>
<evidence type="ECO:0000250" key="1">
    <source>
        <dbReference type="UniProtKB" id="Q61025"/>
    </source>
</evidence>
<evidence type="ECO:0000255" key="2"/>
<evidence type="ECO:0000305" key="3"/>
<name>IFT20_DANRE</name>